<accession>Q8MYL1</accession>
<accession>Q8IN46</accession>
<comment type="function">
    <text evidence="1 3 4">Required for maintenance of chromosomal stability (By similarity). Together with Fancl, and probably Fanci, involved in DNA repair of damage caused by agents that induce interstrand cross-links but not agents that cause double strand breaks (PubMed:16860002, PubMed:20154706). Required for S phase checkpoint activation in response to ionizing radiation induced DNA damage (PubMed:16860002).</text>
</comment>
<comment type="subunit">
    <text evidence="1 4">Homodimer; cannot be ubiquitinated and does not bind DNA (By similarity). Part of a Fanci-Fancd2 heterodimeric complex that binds and scans dsDNA for DNA damage (By similarity). Interacts with Fancl (via C-terminus).</text>
</comment>
<comment type="subcellular location">
    <subcellularLocation>
        <location evidence="1">Nucleus</location>
    </subcellularLocation>
</comment>
<comment type="PTM">
    <text evidence="3">Monoubiquitinated by Fancl in response to ionising radiation.</text>
</comment>
<comment type="disruption phenotype">
    <text evidence="3">RNAi-mediated knockdown is lethal at the pupal stage of the life cycle (PubMed:16860002). Conditional RNAi-mediated knockdown specific to eyes, thorax, wings or nervous system gives no visible phenotype but increases local sensitivity to DNA cross-linking mutagens resulting in increased incidence of mutations and chromosomal aberrations (PubMed:16860002).</text>
</comment>
<comment type="similarity">
    <text evidence="6">Belongs to the Fanconi anemia protein FANCD2 family.</text>
</comment>
<reference evidence="8" key="1">
    <citation type="journal article" date="2003" name="DNA Repair">
        <title>Molecular cloning of the Drosophila Fanconi anaemia gene FANCD2 cDNA.</title>
        <authorList>
            <person name="Castillo V."/>
            <person name="Cabre O."/>
            <person name="Marcos R."/>
            <person name="Surralles J."/>
        </authorList>
    </citation>
    <scope>NUCLEOTIDE SEQUENCE [MRNA]</scope>
    <source>
        <strain evidence="8">Canton-S</strain>
    </source>
</reference>
<reference evidence="10" key="2">
    <citation type="journal article" date="2000" name="Science">
        <title>The genome sequence of Drosophila melanogaster.</title>
        <authorList>
            <person name="Adams M.D."/>
            <person name="Celniker S.E."/>
            <person name="Holt R.A."/>
            <person name="Evans C.A."/>
            <person name="Gocayne J.D."/>
            <person name="Amanatides P.G."/>
            <person name="Scherer S.E."/>
            <person name="Li P.W."/>
            <person name="Hoskins R.A."/>
            <person name="Galle R.F."/>
            <person name="George R.A."/>
            <person name="Lewis S.E."/>
            <person name="Richards S."/>
            <person name="Ashburner M."/>
            <person name="Henderson S.N."/>
            <person name="Sutton G.G."/>
            <person name="Wortman J.R."/>
            <person name="Yandell M.D."/>
            <person name="Zhang Q."/>
            <person name="Chen L.X."/>
            <person name="Brandon R.C."/>
            <person name="Rogers Y.-H.C."/>
            <person name="Blazej R.G."/>
            <person name="Champe M."/>
            <person name="Pfeiffer B.D."/>
            <person name="Wan K.H."/>
            <person name="Doyle C."/>
            <person name="Baxter E.G."/>
            <person name="Helt G."/>
            <person name="Nelson C.R."/>
            <person name="Miklos G.L.G."/>
            <person name="Abril J.F."/>
            <person name="Agbayani A."/>
            <person name="An H.-J."/>
            <person name="Andrews-Pfannkoch C."/>
            <person name="Baldwin D."/>
            <person name="Ballew R.M."/>
            <person name="Basu A."/>
            <person name="Baxendale J."/>
            <person name="Bayraktaroglu L."/>
            <person name="Beasley E.M."/>
            <person name="Beeson K.Y."/>
            <person name="Benos P.V."/>
            <person name="Berman B.P."/>
            <person name="Bhandari D."/>
            <person name="Bolshakov S."/>
            <person name="Borkova D."/>
            <person name="Botchan M.R."/>
            <person name="Bouck J."/>
            <person name="Brokstein P."/>
            <person name="Brottier P."/>
            <person name="Burtis K.C."/>
            <person name="Busam D.A."/>
            <person name="Butler H."/>
            <person name="Cadieu E."/>
            <person name="Center A."/>
            <person name="Chandra I."/>
            <person name="Cherry J.M."/>
            <person name="Cawley S."/>
            <person name="Dahlke C."/>
            <person name="Davenport L.B."/>
            <person name="Davies P."/>
            <person name="de Pablos B."/>
            <person name="Delcher A."/>
            <person name="Deng Z."/>
            <person name="Mays A.D."/>
            <person name="Dew I."/>
            <person name="Dietz S.M."/>
            <person name="Dodson K."/>
            <person name="Doup L.E."/>
            <person name="Downes M."/>
            <person name="Dugan-Rocha S."/>
            <person name="Dunkov B.C."/>
            <person name="Dunn P."/>
            <person name="Durbin K.J."/>
            <person name="Evangelista C.C."/>
            <person name="Ferraz C."/>
            <person name="Ferriera S."/>
            <person name="Fleischmann W."/>
            <person name="Fosler C."/>
            <person name="Gabrielian A.E."/>
            <person name="Garg N.S."/>
            <person name="Gelbart W.M."/>
            <person name="Glasser K."/>
            <person name="Glodek A."/>
            <person name="Gong F."/>
            <person name="Gorrell J.H."/>
            <person name="Gu Z."/>
            <person name="Guan P."/>
            <person name="Harris M."/>
            <person name="Harris N.L."/>
            <person name="Harvey D.A."/>
            <person name="Heiman T.J."/>
            <person name="Hernandez J.R."/>
            <person name="Houck J."/>
            <person name="Hostin D."/>
            <person name="Houston K.A."/>
            <person name="Howland T.J."/>
            <person name="Wei M.-H."/>
            <person name="Ibegwam C."/>
            <person name="Jalali M."/>
            <person name="Kalush F."/>
            <person name="Karpen G.H."/>
            <person name="Ke Z."/>
            <person name="Kennison J.A."/>
            <person name="Ketchum K.A."/>
            <person name="Kimmel B.E."/>
            <person name="Kodira C.D."/>
            <person name="Kraft C.L."/>
            <person name="Kravitz S."/>
            <person name="Kulp D."/>
            <person name="Lai Z."/>
            <person name="Lasko P."/>
            <person name="Lei Y."/>
            <person name="Levitsky A.A."/>
            <person name="Li J.H."/>
            <person name="Li Z."/>
            <person name="Liang Y."/>
            <person name="Lin X."/>
            <person name="Liu X."/>
            <person name="Mattei B."/>
            <person name="McIntosh T.C."/>
            <person name="McLeod M.P."/>
            <person name="McPherson D."/>
            <person name="Merkulov G."/>
            <person name="Milshina N.V."/>
            <person name="Mobarry C."/>
            <person name="Morris J."/>
            <person name="Moshrefi A."/>
            <person name="Mount S.M."/>
            <person name="Moy M."/>
            <person name="Murphy B."/>
            <person name="Murphy L."/>
            <person name="Muzny D.M."/>
            <person name="Nelson D.L."/>
            <person name="Nelson D.R."/>
            <person name="Nelson K.A."/>
            <person name="Nixon K."/>
            <person name="Nusskern D.R."/>
            <person name="Pacleb J.M."/>
            <person name="Palazzolo M."/>
            <person name="Pittman G.S."/>
            <person name="Pan S."/>
            <person name="Pollard J."/>
            <person name="Puri V."/>
            <person name="Reese M.G."/>
            <person name="Reinert K."/>
            <person name="Remington K."/>
            <person name="Saunders R.D.C."/>
            <person name="Scheeler F."/>
            <person name="Shen H."/>
            <person name="Shue B.C."/>
            <person name="Siden-Kiamos I."/>
            <person name="Simpson M."/>
            <person name="Skupski M.P."/>
            <person name="Smith T.J."/>
            <person name="Spier E."/>
            <person name="Spradling A.C."/>
            <person name="Stapleton M."/>
            <person name="Strong R."/>
            <person name="Sun E."/>
            <person name="Svirskas R."/>
            <person name="Tector C."/>
            <person name="Turner R."/>
            <person name="Venter E."/>
            <person name="Wang A.H."/>
            <person name="Wang X."/>
            <person name="Wang Z.-Y."/>
            <person name="Wassarman D.A."/>
            <person name="Weinstock G.M."/>
            <person name="Weissenbach J."/>
            <person name="Williams S.M."/>
            <person name="Woodage T."/>
            <person name="Worley K.C."/>
            <person name="Wu D."/>
            <person name="Yang S."/>
            <person name="Yao Q.A."/>
            <person name="Ye J."/>
            <person name="Yeh R.-F."/>
            <person name="Zaveri J.S."/>
            <person name="Zhan M."/>
            <person name="Zhang G."/>
            <person name="Zhao Q."/>
            <person name="Zheng L."/>
            <person name="Zheng X.H."/>
            <person name="Zhong F.N."/>
            <person name="Zhong W."/>
            <person name="Zhou X."/>
            <person name="Zhu S.C."/>
            <person name="Zhu X."/>
            <person name="Smith H.O."/>
            <person name="Gibbs R.A."/>
            <person name="Myers E.W."/>
            <person name="Rubin G.M."/>
            <person name="Venter J.C."/>
        </authorList>
    </citation>
    <scope>NUCLEOTIDE SEQUENCE [LARGE SCALE GENOMIC DNA]</scope>
    <source>
        <strain evidence="10">Berkeley</strain>
    </source>
</reference>
<reference evidence="10" key="3">
    <citation type="journal article" date="2002" name="Genome Biol.">
        <title>Annotation of the Drosophila melanogaster euchromatic genome: a systematic review.</title>
        <authorList>
            <person name="Misra S."/>
            <person name="Crosby M.A."/>
            <person name="Mungall C.J."/>
            <person name="Matthews B.B."/>
            <person name="Campbell K.S."/>
            <person name="Hradecky P."/>
            <person name="Huang Y."/>
            <person name="Kaminker J.S."/>
            <person name="Millburn G.H."/>
            <person name="Prochnik S.E."/>
            <person name="Smith C.D."/>
            <person name="Tupy J.L."/>
            <person name="Whitfield E.J."/>
            <person name="Bayraktaroglu L."/>
            <person name="Berman B.P."/>
            <person name="Bettencourt B.R."/>
            <person name="Celniker S.E."/>
            <person name="de Grey A.D.N.J."/>
            <person name="Drysdale R.A."/>
            <person name="Harris N.L."/>
            <person name="Richter J."/>
            <person name="Russo S."/>
            <person name="Schroeder A.J."/>
            <person name="Shu S.Q."/>
            <person name="Stapleton M."/>
            <person name="Yamada C."/>
            <person name="Ashburner M."/>
            <person name="Gelbart W.M."/>
            <person name="Rubin G.M."/>
            <person name="Lewis S.E."/>
        </authorList>
    </citation>
    <scope>GENOME REANNOTATION</scope>
    <source>
        <strain evidence="10">Berkeley</strain>
    </source>
</reference>
<reference evidence="6" key="4">
    <citation type="journal article" date="2006" name="DNA Repair">
        <title>Drosophila homologs of FANCD2 and FANCL function in DNA repair.</title>
        <authorList>
            <person name="Marek L.R."/>
            <person name="Bale A.E."/>
        </authorList>
    </citation>
    <scope>FUNCTION</scope>
    <scope>UBIQUITINATION</scope>
    <scope>DISRUPTION PHENOTYPE</scope>
</reference>
<reference evidence="6" key="5">
    <citation type="journal article" date="2010" name="Nat. Struct. Mol. Biol.">
        <title>The structure of the catalytic subunit FANCL of the Fanconi anemia core complex.</title>
        <authorList>
            <person name="Cole A.R."/>
            <person name="Lewis L.P."/>
            <person name="Walden H."/>
        </authorList>
    </citation>
    <scope>FUNCTION</scope>
    <scope>INTERACTION WITH FANCL</scope>
</reference>
<proteinExistence type="evidence at protein level"/>
<dbReference type="EMBL" id="AJ459772">
    <property type="protein sequence ID" value="CAD30834.1"/>
    <property type="molecule type" value="mRNA"/>
</dbReference>
<dbReference type="EMBL" id="AE014297">
    <property type="protein sequence ID" value="AAN13836.2"/>
    <property type="molecule type" value="Genomic_DNA"/>
</dbReference>
<dbReference type="RefSeq" id="NP_996246.1">
    <property type="nucleotide sequence ID" value="NM_206524.2"/>
</dbReference>
<dbReference type="SMR" id="Q8MYL1"/>
<dbReference type="DIP" id="DIP-58988N"/>
<dbReference type="FunCoup" id="Q8MYL1">
    <property type="interactions" value="1878"/>
</dbReference>
<dbReference type="IntAct" id="Q8MYL1">
    <property type="interactions" value="2"/>
</dbReference>
<dbReference type="STRING" id="7227.FBpp0083399"/>
<dbReference type="PaxDb" id="7227-FBpp0083399"/>
<dbReference type="EnsemblMetazoa" id="FBtr0083995">
    <property type="protein sequence ID" value="FBpp0083399"/>
    <property type="gene ID" value="FBgn0038827"/>
</dbReference>
<dbReference type="GeneID" id="2768674"/>
<dbReference type="KEGG" id="dme:Dmel_CG17269"/>
<dbReference type="UCSC" id="CG17269-RA">
    <property type="organism name" value="d. melanogaster"/>
</dbReference>
<dbReference type="AGR" id="FB:FBgn0038827"/>
<dbReference type="CTD" id="2177"/>
<dbReference type="FlyBase" id="FBgn0038827">
    <property type="gene designation" value="Fancd2"/>
</dbReference>
<dbReference type="VEuPathDB" id="VectorBase:FBgn0038827"/>
<dbReference type="eggNOG" id="KOG4712">
    <property type="taxonomic scope" value="Eukaryota"/>
</dbReference>
<dbReference type="GeneTree" id="ENSGT00390000016970"/>
<dbReference type="HOGENOM" id="CLU_002068_1_0_1"/>
<dbReference type="InParanoid" id="Q8MYL1"/>
<dbReference type="OMA" id="QCIRGNT"/>
<dbReference type="OrthoDB" id="27031at2759"/>
<dbReference type="Reactome" id="R-DME-6783310">
    <property type="pathway name" value="Fanconi Anemia Pathway"/>
</dbReference>
<dbReference type="BioGRID-ORCS" id="2768674">
    <property type="hits" value="0 hits in 3 CRISPR screens"/>
</dbReference>
<dbReference type="ChiTaRS" id="Desat1">
    <property type="organism name" value="fly"/>
</dbReference>
<dbReference type="GenomeRNAi" id="2768674"/>
<dbReference type="PRO" id="PR:Q8MYL1"/>
<dbReference type="Proteomes" id="UP000000803">
    <property type="component" value="Chromosome 3R"/>
</dbReference>
<dbReference type="Bgee" id="FBgn0038827">
    <property type="expression patterns" value="Expressed in egg cell and 18 other cell types or tissues"/>
</dbReference>
<dbReference type="ExpressionAtlas" id="Q8MYL1">
    <property type="expression patterns" value="baseline and differential"/>
</dbReference>
<dbReference type="GO" id="GO:0000793">
    <property type="term" value="C:condensed chromosome"/>
    <property type="evidence" value="ECO:0000318"/>
    <property type="project" value="GO_Central"/>
</dbReference>
<dbReference type="GO" id="GO:0005634">
    <property type="term" value="C:nucleus"/>
    <property type="evidence" value="ECO:0000318"/>
    <property type="project" value="GO_Central"/>
</dbReference>
<dbReference type="GO" id="GO:0070182">
    <property type="term" value="F:DNA polymerase binding"/>
    <property type="evidence" value="ECO:0000318"/>
    <property type="project" value="GO_Central"/>
</dbReference>
<dbReference type="GO" id="GO:0006281">
    <property type="term" value="P:DNA repair"/>
    <property type="evidence" value="ECO:0000315"/>
    <property type="project" value="FlyBase"/>
</dbReference>
<dbReference type="GO" id="GO:1990918">
    <property type="term" value="P:double-strand break repair involved in meiotic recombination"/>
    <property type="evidence" value="ECO:0000318"/>
    <property type="project" value="GO_Central"/>
</dbReference>
<dbReference type="GO" id="GO:0007129">
    <property type="term" value="P:homologous chromosome pairing at meiosis"/>
    <property type="evidence" value="ECO:0000318"/>
    <property type="project" value="GO_Central"/>
</dbReference>
<dbReference type="GO" id="GO:0036297">
    <property type="term" value="P:interstrand cross-link repair"/>
    <property type="evidence" value="ECO:0000315"/>
    <property type="project" value="FlyBase"/>
</dbReference>
<dbReference type="GO" id="GO:0031573">
    <property type="term" value="P:mitotic intra-S DNA damage checkpoint signaling"/>
    <property type="evidence" value="ECO:0000315"/>
    <property type="project" value="FlyBase"/>
</dbReference>
<dbReference type="InterPro" id="IPR016024">
    <property type="entry name" value="ARM-type_fold"/>
</dbReference>
<dbReference type="InterPro" id="IPR029448">
    <property type="entry name" value="FANCD2"/>
</dbReference>
<dbReference type="PANTHER" id="PTHR32086">
    <property type="entry name" value="FANCONI ANEMIA GROUP D2 PROTEIN"/>
    <property type="match status" value="1"/>
</dbReference>
<dbReference type="PANTHER" id="PTHR32086:SF0">
    <property type="entry name" value="FANCONI ANEMIA GROUP D2 PROTEIN"/>
    <property type="match status" value="1"/>
</dbReference>
<dbReference type="Pfam" id="PF14631">
    <property type="entry name" value="FancD2"/>
    <property type="match status" value="1"/>
</dbReference>
<dbReference type="SUPFAM" id="SSF48371">
    <property type="entry name" value="ARM repeat"/>
    <property type="match status" value="1"/>
</dbReference>
<keyword id="KW-0131">Cell cycle</keyword>
<keyword id="KW-0227">DNA damage</keyword>
<keyword id="KW-0234">DNA repair</keyword>
<keyword id="KW-1017">Isopeptide bond</keyword>
<keyword id="KW-0539">Nucleus</keyword>
<keyword id="KW-1185">Reference proteome</keyword>
<keyword id="KW-0832">Ubl conjugation</keyword>
<name>FACD2_DROME</name>
<organism evidence="8">
    <name type="scientific">Drosophila melanogaster</name>
    <name type="common">Fruit fly</name>
    <dbReference type="NCBI Taxonomy" id="7227"/>
    <lineage>
        <taxon>Eukaryota</taxon>
        <taxon>Metazoa</taxon>
        <taxon>Ecdysozoa</taxon>
        <taxon>Arthropoda</taxon>
        <taxon>Hexapoda</taxon>
        <taxon>Insecta</taxon>
        <taxon>Pterygota</taxon>
        <taxon>Neoptera</taxon>
        <taxon>Endopterygota</taxon>
        <taxon>Diptera</taxon>
        <taxon>Brachycera</taxon>
        <taxon>Muscomorpha</taxon>
        <taxon>Ephydroidea</taxon>
        <taxon>Drosophilidae</taxon>
        <taxon>Drosophila</taxon>
        <taxon>Sophophora</taxon>
    </lineage>
</organism>
<protein>
    <recommendedName>
        <fullName evidence="6">Fanconi anemia group D2 protein homolog</fullName>
        <shortName evidence="6">Protein FACD2</shortName>
    </recommendedName>
</protein>
<evidence type="ECO:0000250" key="1">
    <source>
        <dbReference type="UniProtKB" id="Q9BXW9"/>
    </source>
</evidence>
<evidence type="ECO:0000256" key="2">
    <source>
        <dbReference type="SAM" id="MobiDB-lite"/>
    </source>
</evidence>
<evidence type="ECO:0000269" key="3">
    <source>
    </source>
</evidence>
<evidence type="ECO:0000269" key="4">
    <source>
    </source>
</evidence>
<evidence type="ECO:0000303" key="5">
    <source>
    </source>
</evidence>
<evidence type="ECO:0000305" key="6"/>
<evidence type="ECO:0000312" key="7">
    <source>
        <dbReference type="EMBL" id="AAN13836.2"/>
    </source>
</evidence>
<evidence type="ECO:0000312" key="8">
    <source>
        <dbReference type="EMBL" id="CAD30834.1"/>
    </source>
</evidence>
<evidence type="ECO:0000312" key="9">
    <source>
        <dbReference type="FlyBase" id="FBgn0038827"/>
    </source>
</evidence>
<evidence type="ECO:0000312" key="10">
    <source>
        <dbReference type="Proteomes" id="UP000000803"/>
    </source>
</evidence>
<feature type="chain" id="PRO_0000458960" description="Fanconi anemia group D2 protein homolog">
    <location>
        <begin position="1"/>
        <end position="1478"/>
    </location>
</feature>
<feature type="region of interest" description="Disordered" evidence="2">
    <location>
        <begin position="33"/>
        <end position="53"/>
    </location>
</feature>
<feature type="region of interest" description="Disordered" evidence="2">
    <location>
        <begin position="896"/>
        <end position="918"/>
    </location>
</feature>
<feature type="region of interest" description="Disordered" evidence="2">
    <location>
        <begin position="1420"/>
        <end position="1478"/>
    </location>
</feature>
<feature type="compositionally biased region" description="Low complexity" evidence="2">
    <location>
        <begin position="35"/>
        <end position="45"/>
    </location>
</feature>
<feature type="compositionally biased region" description="Acidic residues" evidence="2">
    <location>
        <begin position="1429"/>
        <end position="1442"/>
    </location>
</feature>
<feature type="compositionally biased region" description="Basic residues" evidence="2">
    <location>
        <begin position="1468"/>
        <end position="1478"/>
    </location>
</feature>
<feature type="cross-link" description="Glycyl lysine isopeptide (Lys-Gly) (interchain with G-Cter in ubiquitin)" evidence="1">
    <location>
        <position position="595"/>
    </location>
</feature>
<gene>
    <name evidence="9" type="primary">Fancd2</name>
    <name evidence="7" type="synonym">CG31192</name>
    <name evidence="7" type="synonym">CG31194</name>
    <name evidence="5" type="synonym">FAD</name>
    <name evidence="9" type="ORF">CG17269</name>
</gene>
<sequence length="1478" mass="167463">MYKQFKKRSKKPLNTIDENATIKVPRLAETTTNISVESSSGGSEENIPASQEHTQRFLSQHSVILAATLGRTQSSSRNIATLSRQPNNFFELVLVRAGVQLDQGDSLILACDHVPIVSKLREIFTSASSYTDKMETFKTGLNAAMAPGSKLVQKLLTGCTVDAAGEEQIYQSQNSMFMNFLMIDFMRDACVEVLLNKIEEVAKSDRVIMGKAAIPLPLLPLMLTQLRYLTASHKVEIYSRIEVIFNRATESAKLDIIANAELILDASMHDEFVELLNINYSSTEDLFHMTTVQTLGNLSLSDRTQAKLRVRILDFATSGQCSDAILPHLIRLLLNVLKIDTDDSVRDLIGSLRGIFNWRHTNETEKISASEDSKKSQLELFGFLELGLIRSKKFYQACQRSSASVPAAEFTSFDMILLLLLIHVNEDNSLYIENILRRRIKLEHITVSILEEIRQHYRHILEQHITTLMNILHDFMREKNRIVSDFAKSSYSILFKIFNSIQKNILKKLLELTCDKSSPHLTTMALELLRELQRKSAKDVQNCATLLIPMLDRISDLSLTQTRVAMDLLCHVAFPDPNLSPCLQLQEQVDMVVKKQLINSIDNIKKQGIIGCVQLIDAMARIANNGVDRDEFIASVENVDSLPDGRGKMAANLIIRTEASIGNSTESLALFFEELATVFNQRNEGTSGCELDNQFIAWACDLVTFRFQASFVTENVPETLKGIKLEYQLNINELDDTDANTESDVLNIGINISKLVLSPKVKACDSIYVLAPLFNYVRVLYKHRHQDSLESINALLGCAIVLPSFFEDDNYVSVFENFEAEQQKDILSIYFHTVNWMRVSISAFASQRDPPTRRRVLSRLGELIRIEQRMKPLLARAPVDFVAPPYQFLTNVKLSNQNQKRPGPKPAAKLNATLPEPDLTGNQPSIADFTIKVGQCKTVKTKTDFEQMYGPRERYRPMEVEIIMLLVEQKFVLNHQLEEEQMGEFLGLLELRFLLEDVVQKLEAAVLRHHDSYDADSFRPHLAKPEDFICDLLPCLHEVNNHLITLGEAIDNQLTEVSHVYSNLDLFKDQFCYIKSCFGLCVRLFALYFAWSEWSDKSQEQLLHKSLLKLQPKTQWKRLEKQSVPQLANLTFQYFLKYEKSVLNLSTAVHLHRLLCNLLKLGSLQSDASQPRFQQAEDLRILCGTLLRRKWFHYSGTLDKGGQCNIYLDELVKGFLKKSNAKSQTELLTELVKQCSILNTKDKALTSFPNFKKANFPLLFRGLCEVLIHSLSGQVSVDSRGDKLKLWESAVDLLNGLLSIVQQVEQPRNFGLFLKHSLLFLKLLLQHGMSALESIVREDPERLTRFLHELQKVTRFLHQLCCHSKSIKNTAIISYIPSLRETIETLVFRVKALLAANNCHSAFHMGNMINRDLHGDSIITPRSSFAGEENSDDELPADDTSVDETVLGDDMGITAVSVSTRPSDGSRRSKSSSRSKCF</sequence>